<sequence>MDALTRERTLIGSDDTTGLDLEPVQRPSKDEAMAAVRTLLAWAGDNPEREGLIDTPKRVVEAFDEWFAGYHGDPAKELSRTFEDVQGYDDMVMLRGIDVQSHCEHHMAPFLGKAWIAYMPTGKVVGLSKLARLVEIFAKRLQTQETMTMQIADAIEDHLSAAGVAVLIDAEHQCMSTRGVHHHDVSTITTQFRGVFKTDKVLQQRFMDLVKK</sequence>
<organism>
    <name type="scientific">Caulobacter vibrioides (strain ATCC 19089 / CIP 103742 / CB 15)</name>
    <name type="common">Caulobacter crescentus</name>
    <dbReference type="NCBI Taxonomy" id="190650"/>
    <lineage>
        <taxon>Bacteria</taxon>
        <taxon>Pseudomonadati</taxon>
        <taxon>Pseudomonadota</taxon>
        <taxon>Alphaproteobacteria</taxon>
        <taxon>Caulobacterales</taxon>
        <taxon>Caulobacteraceae</taxon>
        <taxon>Caulobacter</taxon>
    </lineage>
</organism>
<keyword id="KW-0342">GTP-binding</keyword>
<keyword id="KW-0378">Hydrolase</keyword>
<keyword id="KW-0479">Metal-binding</keyword>
<keyword id="KW-0547">Nucleotide-binding</keyword>
<keyword id="KW-0554">One-carbon metabolism</keyword>
<keyword id="KW-1185">Reference proteome</keyword>
<keyword id="KW-0862">Zinc</keyword>
<accession>Q9AAY3</accession>
<comment type="catalytic activity">
    <reaction evidence="2">
        <text>GTP + H2O = 7,8-dihydroneopterin 3'-triphosphate + formate + H(+)</text>
        <dbReference type="Rhea" id="RHEA:17473"/>
        <dbReference type="ChEBI" id="CHEBI:15377"/>
        <dbReference type="ChEBI" id="CHEBI:15378"/>
        <dbReference type="ChEBI" id="CHEBI:15740"/>
        <dbReference type="ChEBI" id="CHEBI:37565"/>
        <dbReference type="ChEBI" id="CHEBI:58462"/>
        <dbReference type="EC" id="3.5.4.16"/>
    </reaction>
</comment>
<comment type="pathway">
    <text evidence="2">Cofactor biosynthesis; 7,8-dihydroneopterin triphosphate biosynthesis; 7,8-dihydroneopterin triphosphate from GTP: step 1/1.</text>
</comment>
<comment type="subunit">
    <text evidence="1">Toroid-shaped homodecamer, composed of two pentamers of five dimers.</text>
</comment>
<comment type="similarity">
    <text evidence="2">Belongs to the GTP cyclohydrolase I family.</text>
</comment>
<evidence type="ECO:0000250" key="1"/>
<evidence type="ECO:0000255" key="2">
    <source>
        <dbReference type="HAMAP-Rule" id="MF_00223"/>
    </source>
</evidence>
<protein>
    <recommendedName>
        <fullName evidence="2">GTP cyclohydrolase 1</fullName>
        <ecNumber evidence="2">3.5.4.16</ecNumber>
    </recommendedName>
    <alternativeName>
        <fullName evidence="2">GTP cyclohydrolase I</fullName>
        <shortName evidence="2">GTP-CH-I</shortName>
    </alternativeName>
</protein>
<reference key="1">
    <citation type="journal article" date="2001" name="Proc. Natl. Acad. Sci. U.S.A.">
        <title>Complete genome sequence of Caulobacter crescentus.</title>
        <authorList>
            <person name="Nierman W.C."/>
            <person name="Feldblyum T.V."/>
            <person name="Laub M.T."/>
            <person name="Paulsen I.T."/>
            <person name="Nelson K.E."/>
            <person name="Eisen J.A."/>
            <person name="Heidelberg J.F."/>
            <person name="Alley M.R.K."/>
            <person name="Ohta N."/>
            <person name="Maddock J.R."/>
            <person name="Potocka I."/>
            <person name="Nelson W.C."/>
            <person name="Newton A."/>
            <person name="Stephens C."/>
            <person name="Phadke N.D."/>
            <person name="Ely B."/>
            <person name="DeBoy R.T."/>
            <person name="Dodson R.J."/>
            <person name="Durkin A.S."/>
            <person name="Gwinn M.L."/>
            <person name="Haft D.H."/>
            <person name="Kolonay J.F."/>
            <person name="Smit J."/>
            <person name="Craven M.B."/>
            <person name="Khouri H.M."/>
            <person name="Shetty J."/>
            <person name="Berry K.J."/>
            <person name="Utterback T.R."/>
            <person name="Tran K."/>
            <person name="Wolf A.M."/>
            <person name="Vamathevan J.J."/>
            <person name="Ermolaeva M.D."/>
            <person name="White O."/>
            <person name="Salzberg S.L."/>
            <person name="Venter J.C."/>
            <person name="Shapiro L."/>
            <person name="Fraser C.M."/>
        </authorList>
    </citation>
    <scope>NUCLEOTIDE SEQUENCE [LARGE SCALE GENOMIC DNA]</scope>
    <source>
        <strain>ATCC 19089 / CIP 103742 / CB 15</strain>
    </source>
</reference>
<dbReference type="EC" id="3.5.4.16" evidence="2"/>
<dbReference type="EMBL" id="AE005673">
    <property type="protein sequence ID" value="AAK22446.1"/>
    <property type="molecule type" value="Genomic_DNA"/>
</dbReference>
<dbReference type="PIR" id="B87306">
    <property type="entry name" value="B87306"/>
</dbReference>
<dbReference type="RefSeq" id="NP_419278.1">
    <property type="nucleotide sequence ID" value="NC_002696.2"/>
</dbReference>
<dbReference type="RefSeq" id="WP_010918347.1">
    <property type="nucleotide sequence ID" value="NC_002696.2"/>
</dbReference>
<dbReference type="SMR" id="Q9AAY3"/>
<dbReference type="STRING" id="190650.CC_0459"/>
<dbReference type="EnsemblBacteria" id="AAK22446">
    <property type="protein sequence ID" value="AAK22446"/>
    <property type="gene ID" value="CC_0459"/>
</dbReference>
<dbReference type="KEGG" id="ccr:CC_0459"/>
<dbReference type="PATRIC" id="fig|190650.5.peg.465"/>
<dbReference type="eggNOG" id="COG0302">
    <property type="taxonomic scope" value="Bacteria"/>
</dbReference>
<dbReference type="HOGENOM" id="CLU_049768_3_1_5"/>
<dbReference type="BioCyc" id="CAULO:CC0459-MONOMER"/>
<dbReference type="UniPathway" id="UPA00848">
    <property type="reaction ID" value="UER00151"/>
</dbReference>
<dbReference type="Proteomes" id="UP000001816">
    <property type="component" value="Chromosome"/>
</dbReference>
<dbReference type="GO" id="GO:0005737">
    <property type="term" value="C:cytoplasm"/>
    <property type="evidence" value="ECO:0007669"/>
    <property type="project" value="TreeGrafter"/>
</dbReference>
<dbReference type="GO" id="GO:0005525">
    <property type="term" value="F:GTP binding"/>
    <property type="evidence" value="ECO:0007669"/>
    <property type="project" value="UniProtKB-KW"/>
</dbReference>
<dbReference type="GO" id="GO:0003934">
    <property type="term" value="F:GTP cyclohydrolase I activity"/>
    <property type="evidence" value="ECO:0007669"/>
    <property type="project" value="UniProtKB-UniRule"/>
</dbReference>
<dbReference type="GO" id="GO:0008270">
    <property type="term" value="F:zinc ion binding"/>
    <property type="evidence" value="ECO:0007669"/>
    <property type="project" value="UniProtKB-UniRule"/>
</dbReference>
<dbReference type="GO" id="GO:0006730">
    <property type="term" value="P:one-carbon metabolic process"/>
    <property type="evidence" value="ECO:0007669"/>
    <property type="project" value="UniProtKB-UniRule"/>
</dbReference>
<dbReference type="GO" id="GO:0006729">
    <property type="term" value="P:tetrahydrobiopterin biosynthetic process"/>
    <property type="evidence" value="ECO:0007669"/>
    <property type="project" value="TreeGrafter"/>
</dbReference>
<dbReference type="GO" id="GO:0046654">
    <property type="term" value="P:tetrahydrofolate biosynthetic process"/>
    <property type="evidence" value="ECO:0007669"/>
    <property type="project" value="UniProtKB-UniRule"/>
</dbReference>
<dbReference type="FunFam" id="1.10.286.10:FF:000001">
    <property type="entry name" value="GTP cyclohydrolase 1"/>
    <property type="match status" value="1"/>
</dbReference>
<dbReference type="FunFam" id="3.30.1130.10:FF:000001">
    <property type="entry name" value="GTP cyclohydrolase 1"/>
    <property type="match status" value="1"/>
</dbReference>
<dbReference type="Gene3D" id="1.10.286.10">
    <property type="match status" value="1"/>
</dbReference>
<dbReference type="Gene3D" id="3.30.1130.10">
    <property type="match status" value="1"/>
</dbReference>
<dbReference type="HAMAP" id="MF_00223">
    <property type="entry name" value="FolE"/>
    <property type="match status" value="1"/>
</dbReference>
<dbReference type="InterPro" id="IPR043133">
    <property type="entry name" value="GTP-CH-I_C/QueF"/>
</dbReference>
<dbReference type="InterPro" id="IPR043134">
    <property type="entry name" value="GTP-CH-I_N"/>
</dbReference>
<dbReference type="InterPro" id="IPR001474">
    <property type="entry name" value="GTP_CycHdrlase_I"/>
</dbReference>
<dbReference type="InterPro" id="IPR018234">
    <property type="entry name" value="GTP_CycHdrlase_I_CS"/>
</dbReference>
<dbReference type="InterPro" id="IPR020602">
    <property type="entry name" value="GTP_CycHdrlase_I_dom"/>
</dbReference>
<dbReference type="NCBIfam" id="TIGR00063">
    <property type="entry name" value="folE"/>
    <property type="match status" value="1"/>
</dbReference>
<dbReference type="NCBIfam" id="NF006825">
    <property type="entry name" value="PRK09347.1-2"/>
    <property type="match status" value="1"/>
</dbReference>
<dbReference type="NCBIfam" id="NF006826">
    <property type="entry name" value="PRK09347.1-3"/>
    <property type="match status" value="1"/>
</dbReference>
<dbReference type="PANTHER" id="PTHR11109:SF7">
    <property type="entry name" value="GTP CYCLOHYDROLASE 1"/>
    <property type="match status" value="1"/>
</dbReference>
<dbReference type="PANTHER" id="PTHR11109">
    <property type="entry name" value="GTP CYCLOHYDROLASE I"/>
    <property type="match status" value="1"/>
</dbReference>
<dbReference type="Pfam" id="PF01227">
    <property type="entry name" value="GTP_cyclohydroI"/>
    <property type="match status" value="1"/>
</dbReference>
<dbReference type="SUPFAM" id="SSF55620">
    <property type="entry name" value="Tetrahydrobiopterin biosynthesis enzymes-like"/>
    <property type="match status" value="1"/>
</dbReference>
<dbReference type="PROSITE" id="PS00859">
    <property type="entry name" value="GTP_CYCLOHYDROL_1_1"/>
    <property type="match status" value="1"/>
</dbReference>
<name>GCH1_CAUVC</name>
<feature type="chain" id="PRO_0000119395" description="GTP cyclohydrolase 1">
    <location>
        <begin position="1"/>
        <end position="212"/>
    </location>
</feature>
<feature type="binding site" evidence="2">
    <location>
        <position position="103"/>
    </location>
    <ligand>
        <name>Zn(2+)</name>
        <dbReference type="ChEBI" id="CHEBI:29105"/>
    </ligand>
</feature>
<feature type="binding site" evidence="2">
    <location>
        <position position="106"/>
    </location>
    <ligand>
        <name>Zn(2+)</name>
        <dbReference type="ChEBI" id="CHEBI:29105"/>
    </ligand>
</feature>
<feature type="binding site" evidence="2">
    <location>
        <position position="174"/>
    </location>
    <ligand>
        <name>Zn(2+)</name>
        <dbReference type="ChEBI" id="CHEBI:29105"/>
    </ligand>
</feature>
<proteinExistence type="inferred from homology"/>
<gene>
    <name evidence="2" type="primary">folE</name>
    <name type="ordered locus">CC_0459</name>
</gene>